<name>VQ10_ARATH</name>
<feature type="chain" id="PRO_0000432311" description="VQ motif-containing protein 10">
    <location>
        <begin position="1"/>
        <end position="108"/>
    </location>
</feature>
<feature type="region of interest" description="Disordered" evidence="2">
    <location>
        <begin position="65"/>
        <end position="85"/>
    </location>
</feature>
<feature type="short sequence motif" description="VQ" evidence="5">
    <location>
        <begin position="29"/>
        <end position="38"/>
    </location>
</feature>
<feature type="compositionally biased region" description="Gly residues" evidence="2">
    <location>
        <begin position="73"/>
        <end position="82"/>
    </location>
</feature>
<feature type="sequence conflict" description="In Ref. 1; AAV69754." evidence="5" ref="1">
    <location>
        <begin position="105"/>
        <end position="108"/>
    </location>
</feature>
<protein>
    <recommendedName>
        <fullName evidence="4">VQ motif-containing protein 10</fullName>
        <shortName evidence="4">AtVQ10</shortName>
    </recommendedName>
    <alternativeName>
        <fullName evidence="8">Tobacco rattle virus-induced protein variant 1</fullName>
    </alternativeName>
</protein>
<sequence length="108" mass="11875">MSGRGKVKSEPMKVVFINTQYVETDARSFKTVVQELTGKNAIVAAGPFDSPSAFDGRCYDGGSKIGEDTRQLHGGGGGGGRMGTTTEFDRLFKEMPHMEELYKLWSEY</sequence>
<gene>
    <name evidence="4" type="primary">VQ10</name>
    <name evidence="8" type="synonym">TRI</name>
    <name evidence="6" type="ordered locus">At1g78410</name>
    <name evidence="7" type="ORF">F3F9.8</name>
</gene>
<dbReference type="EMBL" id="AY821790">
    <property type="protein sequence ID" value="AAV69753.1"/>
    <property type="molecule type" value="mRNA"/>
</dbReference>
<dbReference type="EMBL" id="AY821791">
    <property type="protein sequence ID" value="AAV69754.1"/>
    <property type="molecule type" value="mRNA"/>
</dbReference>
<dbReference type="EMBL" id="AC013430">
    <property type="protein sequence ID" value="AAF71810.1"/>
    <property type="status" value="ALT_SEQ"/>
    <property type="molecule type" value="Genomic_DNA"/>
</dbReference>
<dbReference type="EMBL" id="CP002684">
    <property type="protein sequence ID" value="AEE36102.1"/>
    <property type="molecule type" value="Genomic_DNA"/>
</dbReference>
<dbReference type="EMBL" id="CP002684">
    <property type="protein sequence ID" value="ANM58670.1"/>
    <property type="molecule type" value="Genomic_DNA"/>
</dbReference>
<dbReference type="EMBL" id="AY070754">
    <property type="protein sequence ID" value="AAL50092.1"/>
    <property type="molecule type" value="mRNA"/>
</dbReference>
<dbReference type="EMBL" id="AY102135">
    <property type="protein sequence ID" value="AAM26702.1"/>
    <property type="molecule type" value="mRNA"/>
</dbReference>
<dbReference type="EMBL" id="AY085552">
    <property type="protein sequence ID" value="AAM67305.1"/>
    <property type="molecule type" value="mRNA"/>
</dbReference>
<dbReference type="PIR" id="F96812">
    <property type="entry name" value="F96812"/>
</dbReference>
<dbReference type="RefSeq" id="NP_001321086.1">
    <property type="nucleotide sequence ID" value="NM_001334826.1"/>
</dbReference>
<dbReference type="RefSeq" id="NP_565179.1">
    <property type="nucleotide sequence ID" value="NM_106488.3"/>
</dbReference>
<dbReference type="FunCoup" id="Q8VYI5">
    <property type="interactions" value="38"/>
</dbReference>
<dbReference type="STRING" id="3702.Q8VYI5"/>
<dbReference type="PaxDb" id="3702-AT1G78410.1"/>
<dbReference type="DNASU" id="844177"/>
<dbReference type="EnsemblPlants" id="AT1G78410.1">
    <property type="protein sequence ID" value="AT1G78410.1"/>
    <property type="gene ID" value="AT1G78410"/>
</dbReference>
<dbReference type="EnsemblPlants" id="AT1G78410.2">
    <property type="protein sequence ID" value="AT1G78410.2"/>
    <property type="gene ID" value="AT1G78410"/>
</dbReference>
<dbReference type="GeneID" id="844177"/>
<dbReference type="Gramene" id="AT1G78410.1">
    <property type="protein sequence ID" value="AT1G78410.1"/>
    <property type="gene ID" value="AT1G78410"/>
</dbReference>
<dbReference type="Gramene" id="AT1G78410.2">
    <property type="protein sequence ID" value="AT1G78410.2"/>
    <property type="gene ID" value="AT1G78410"/>
</dbReference>
<dbReference type="KEGG" id="ath:AT1G78410"/>
<dbReference type="Araport" id="AT1G78410"/>
<dbReference type="TAIR" id="AT1G78410"/>
<dbReference type="eggNOG" id="ENOG502SFRK">
    <property type="taxonomic scope" value="Eukaryota"/>
</dbReference>
<dbReference type="HOGENOM" id="CLU_169898_0_0_1"/>
<dbReference type="InParanoid" id="Q8VYI5"/>
<dbReference type="OMA" id="VEDFWID"/>
<dbReference type="OrthoDB" id="691083at2759"/>
<dbReference type="PhylomeDB" id="Q8VYI5"/>
<dbReference type="PRO" id="PR:Q8VYI5"/>
<dbReference type="Proteomes" id="UP000006548">
    <property type="component" value="Chromosome 1"/>
</dbReference>
<dbReference type="ExpressionAtlas" id="Q8VYI5">
    <property type="expression patterns" value="baseline and differential"/>
</dbReference>
<dbReference type="GO" id="GO:0005634">
    <property type="term" value="C:nucleus"/>
    <property type="evidence" value="ECO:0007669"/>
    <property type="project" value="UniProtKB-SubCell"/>
</dbReference>
<dbReference type="GO" id="GO:0006979">
    <property type="term" value="P:response to oxidative stress"/>
    <property type="evidence" value="ECO:0000315"/>
    <property type="project" value="TAIR"/>
</dbReference>
<dbReference type="InterPro" id="IPR008889">
    <property type="entry name" value="VQ"/>
</dbReference>
<dbReference type="InterPro" id="IPR039608">
    <property type="entry name" value="VQ_1/10"/>
</dbReference>
<dbReference type="PANTHER" id="PTHR34777">
    <property type="entry name" value="VQ MOTIF-CONTAINING PROTEIN 10"/>
    <property type="match status" value="1"/>
</dbReference>
<dbReference type="PANTHER" id="PTHR34777:SF1">
    <property type="entry name" value="VQ MOTIF-CONTAINING PROTEIN 10"/>
    <property type="match status" value="1"/>
</dbReference>
<dbReference type="Pfam" id="PF05678">
    <property type="entry name" value="VQ"/>
    <property type="match status" value="1"/>
</dbReference>
<evidence type="ECO:0000250" key="1">
    <source>
        <dbReference type="UniProtKB" id="Q9M9F0"/>
    </source>
</evidence>
<evidence type="ECO:0000256" key="2">
    <source>
        <dbReference type="SAM" id="MobiDB-lite"/>
    </source>
</evidence>
<evidence type="ECO:0000269" key="3">
    <source>
    </source>
</evidence>
<evidence type="ECO:0000303" key="4">
    <source>
    </source>
</evidence>
<evidence type="ECO:0000305" key="5"/>
<evidence type="ECO:0000312" key="6">
    <source>
        <dbReference type="Araport" id="AT1G78410"/>
    </source>
</evidence>
<evidence type="ECO:0000312" key="7">
    <source>
        <dbReference type="EMBL" id="AAF71810.1"/>
    </source>
</evidence>
<evidence type="ECO:0000312" key="8">
    <source>
        <dbReference type="EMBL" id="AAV69753.1"/>
    </source>
</evidence>
<proteinExistence type="evidence at protein level"/>
<accession>Q8VYI5</accession>
<accession>Q5PXT0</accession>
<accession>Q9M9F7</accession>
<organism>
    <name type="scientific">Arabidopsis thaliana</name>
    <name type="common">Mouse-ear cress</name>
    <dbReference type="NCBI Taxonomy" id="3702"/>
    <lineage>
        <taxon>Eukaryota</taxon>
        <taxon>Viridiplantae</taxon>
        <taxon>Streptophyta</taxon>
        <taxon>Embryophyta</taxon>
        <taxon>Tracheophyta</taxon>
        <taxon>Spermatophyta</taxon>
        <taxon>Magnoliopsida</taxon>
        <taxon>eudicotyledons</taxon>
        <taxon>Gunneridae</taxon>
        <taxon>Pentapetalae</taxon>
        <taxon>rosids</taxon>
        <taxon>malvids</taxon>
        <taxon>Brassicales</taxon>
        <taxon>Brassicaceae</taxon>
        <taxon>Camelineae</taxon>
        <taxon>Arabidopsis</taxon>
    </lineage>
</organism>
<keyword id="KW-0539">Nucleus</keyword>
<keyword id="KW-1185">Reference proteome</keyword>
<reference key="1">
    <citation type="journal article" date="2004" name="Mol. Plant Microbe Interact.">
        <title>Enhancer trapping identifies TRI, an Arabidopsis gene up-regulated by pathogen infection.</title>
        <authorList>
            <person name="Fridborg I."/>
            <person name="Williams A."/>
            <person name="Yang A."/>
            <person name="MacFarlane S."/>
            <person name="Coutts K."/>
            <person name="Angell S."/>
        </authorList>
    </citation>
    <scope>NUCLEOTIDE SEQUENCE [MRNA]</scope>
    <source>
        <strain>cv. Columbia</strain>
    </source>
</reference>
<reference key="2">
    <citation type="journal article" date="2000" name="Nature">
        <title>Sequence and analysis of chromosome 1 of the plant Arabidopsis thaliana.</title>
        <authorList>
            <person name="Theologis A."/>
            <person name="Ecker J.R."/>
            <person name="Palm C.J."/>
            <person name="Federspiel N.A."/>
            <person name="Kaul S."/>
            <person name="White O."/>
            <person name="Alonso J."/>
            <person name="Altafi H."/>
            <person name="Araujo R."/>
            <person name="Bowman C.L."/>
            <person name="Brooks S.Y."/>
            <person name="Buehler E."/>
            <person name="Chan A."/>
            <person name="Chao Q."/>
            <person name="Chen H."/>
            <person name="Cheuk R.F."/>
            <person name="Chin C.W."/>
            <person name="Chung M.K."/>
            <person name="Conn L."/>
            <person name="Conway A.B."/>
            <person name="Conway A.R."/>
            <person name="Creasy T.H."/>
            <person name="Dewar K."/>
            <person name="Dunn P."/>
            <person name="Etgu P."/>
            <person name="Feldblyum T.V."/>
            <person name="Feng J.-D."/>
            <person name="Fong B."/>
            <person name="Fujii C.Y."/>
            <person name="Gill J.E."/>
            <person name="Goldsmith A.D."/>
            <person name="Haas B."/>
            <person name="Hansen N.F."/>
            <person name="Hughes B."/>
            <person name="Huizar L."/>
            <person name="Hunter J.L."/>
            <person name="Jenkins J."/>
            <person name="Johnson-Hopson C."/>
            <person name="Khan S."/>
            <person name="Khaykin E."/>
            <person name="Kim C.J."/>
            <person name="Koo H.L."/>
            <person name="Kremenetskaia I."/>
            <person name="Kurtz D.B."/>
            <person name="Kwan A."/>
            <person name="Lam B."/>
            <person name="Langin-Hooper S."/>
            <person name="Lee A."/>
            <person name="Lee J.M."/>
            <person name="Lenz C.A."/>
            <person name="Li J.H."/>
            <person name="Li Y.-P."/>
            <person name="Lin X."/>
            <person name="Liu S.X."/>
            <person name="Liu Z.A."/>
            <person name="Luros J.S."/>
            <person name="Maiti R."/>
            <person name="Marziali A."/>
            <person name="Militscher J."/>
            <person name="Miranda M."/>
            <person name="Nguyen M."/>
            <person name="Nierman W.C."/>
            <person name="Osborne B.I."/>
            <person name="Pai G."/>
            <person name="Peterson J."/>
            <person name="Pham P.K."/>
            <person name="Rizzo M."/>
            <person name="Rooney T."/>
            <person name="Rowley D."/>
            <person name="Sakano H."/>
            <person name="Salzberg S.L."/>
            <person name="Schwartz J.R."/>
            <person name="Shinn P."/>
            <person name="Southwick A.M."/>
            <person name="Sun H."/>
            <person name="Tallon L.J."/>
            <person name="Tambunga G."/>
            <person name="Toriumi M.J."/>
            <person name="Town C.D."/>
            <person name="Utterback T."/>
            <person name="Van Aken S."/>
            <person name="Vaysberg M."/>
            <person name="Vysotskaia V.S."/>
            <person name="Walker M."/>
            <person name="Wu D."/>
            <person name="Yu G."/>
            <person name="Fraser C.M."/>
            <person name="Venter J.C."/>
            <person name="Davis R.W."/>
        </authorList>
    </citation>
    <scope>NUCLEOTIDE SEQUENCE [LARGE SCALE GENOMIC DNA]</scope>
    <source>
        <strain>cv. Columbia</strain>
    </source>
</reference>
<reference key="3">
    <citation type="journal article" date="2017" name="Plant J.">
        <title>Araport11: a complete reannotation of the Arabidopsis thaliana reference genome.</title>
        <authorList>
            <person name="Cheng C.Y."/>
            <person name="Krishnakumar V."/>
            <person name="Chan A.P."/>
            <person name="Thibaud-Nissen F."/>
            <person name="Schobel S."/>
            <person name="Town C.D."/>
        </authorList>
    </citation>
    <scope>GENOME REANNOTATION</scope>
    <source>
        <strain>cv. Columbia</strain>
    </source>
</reference>
<reference key="4">
    <citation type="journal article" date="2003" name="Science">
        <title>Empirical analysis of transcriptional activity in the Arabidopsis genome.</title>
        <authorList>
            <person name="Yamada K."/>
            <person name="Lim J."/>
            <person name="Dale J.M."/>
            <person name="Chen H."/>
            <person name="Shinn P."/>
            <person name="Palm C.J."/>
            <person name="Southwick A.M."/>
            <person name="Wu H.C."/>
            <person name="Kim C.J."/>
            <person name="Nguyen M."/>
            <person name="Pham P.K."/>
            <person name="Cheuk R.F."/>
            <person name="Karlin-Newmann G."/>
            <person name="Liu S.X."/>
            <person name="Lam B."/>
            <person name="Sakano H."/>
            <person name="Wu T."/>
            <person name="Yu G."/>
            <person name="Miranda M."/>
            <person name="Quach H.L."/>
            <person name="Tripp M."/>
            <person name="Chang C.H."/>
            <person name="Lee J.M."/>
            <person name="Toriumi M.J."/>
            <person name="Chan M.M."/>
            <person name="Tang C.C."/>
            <person name="Onodera C.S."/>
            <person name="Deng J.M."/>
            <person name="Akiyama K."/>
            <person name="Ansari Y."/>
            <person name="Arakawa T."/>
            <person name="Banh J."/>
            <person name="Banno F."/>
            <person name="Bowser L."/>
            <person name="Brooks S.Y."/>
            <person name="Carninci P."/>
            <person name="Chao Q."/>
            <person name="Choy N."/>
            <person name="Enju A."/>
            <person name="Goldsmith A.D."/>
            <person name="Gurjal M."/>
            <person name="Hansen N.F."/>
            <person name="Hayashizaki Y."/>
            <person name="Johnson-Hopson C."/>
            <person name="Hsuan V.W."/>
            <person name="Iida K."/>
            <person name="Karnes M."/>
            <person name="Khan S."/>
            <person name="Koesema E."/>
            <person name="Ishida J."/>
            <person name="Jiang P.X."/>
            <person name="Jones T."/>
            <person name="Kawai J."/>
            <person name="Kamiya A."/>
            <person name="Meyers C."/>
            <person name="Nakajima M."/>
            <person name="Narusaka M."/>
            <person name="Seki M."/>
            <person name="Sakurai T."/>
            <person name="Satou M."/>
            <person name="Tamse R."/>
            <person name="Vaysberg M."/>
            <person name="Wallender E.K."/>
            <person name="Wong C."/>
            <person name="Yamamura Y."/>
            <person name="Yuan S."/>
            <person name="Shinozaki K."/>
            <person name="Davis R.W."/>
            <person name="Theologis A."/>
            <person name="Ecker J.R."/>
        </authorList>
    </citation>
    <scope>NUCLEOTIDE SEQUENCE [LARGE SCALE MRNA]</scope>
    <source>
        <strain>cv. Columbia</strain>
    </source>
</reference>
<reference key="5">
    <citation type="submission" date="2002-03" db="EMBL/GenBank/DDBJ databases">
        <title>Full-length cDNA from Arabidopsis thaliana.</title>
        <authorList>
            <person name="Brover V.V."/>
            <person name="Troukhan M.E."/>
            <person name="Alexandrov N.A."/>
            <person name="Lu Y.-P."/>
            <person name="Flavell R.B."/>
            <person name="Feldmann K.A."/>
        </authorList>
    </citation>
    <scope>NUCLEOTIDE SEQUENCE [LARGE SCALE MRNA]</scope>
</reference>
<reference key="6">
    <citation type="journal article" date="2012" name="Plant Physiol.">
        <title>Structural and functional analysis of VQ motif-containing proteins in Arabidopsis as interacting proteins of WRKY transcription factors.</title>
        <authorList>
            <person name="Cheng Y."/>
            <person name="Zhou Y."/>
            <person name="Yang Y."/>
            <person name="Chi Y.J."/>
            <person name="Zhou J."/>
            <person name="Chen J.Y."/>
            <person name="Wang F."/>
            <person name="Fan B."/>
            <person name="Shi K."/>
            <person name="Zhou Y.H."/>
            <person name="Yu J.Q."/>
            <person name="Chen Z."/>
        </authorList>
    </citation>
    <scope>INTERACTION WITH WRKY25; WRKY26 AND WRKY33</scope>
    <scope>GENE FAMILY</scope>
    <scope>NOMENCLATURE</scope>
</reference>
<comment type="function">
    <text evidence="1">May modulate WRKY transcription factor activities.</text>
</comment>
<comment type="subunit">
    <text evidence="3">Interacts with WRKY25, WRKY26 and WRKY33.</text>
</comment>
<comment type="subcellular location">
    <subcellularLocation>
        <location evidence="1">Nucleus</location>
    </subcellularLocation>
</comment>
<comment type="sequence caution" evidence="5">
    <conflict type="erroneous gene model prediction">
        <sequence resource="EMBL-CDS" id="AAF71810"/>
    </conflict>
</comment>